<gene>
    <name evidence="1" type="primary">hslO</name>
    <name type="ordered locus">MW0467</name>
</gene>
<protein>
    <recommendedName>
        <fullName evidence="1">33 kDa chaperonin</fullName>
    </recommendedName>
    <alternativeName>
        <fullName evidence="1">Heat shock protein 33 homolog</fullName>
        <shortName evidence="1">HSP33</shortName>
    </alternativeName>
</protein>
<proteinExistence type="inferred from homology"/>
<accession>Q8NXZ3</accession>
<evidence type="ECO:0000255" key="1">
    <source>
        <dbReference type="HAMAP-Rule" id="MF_00117"/>
    </source>
</evidence>
<feature type="chain" id="PRO_0000192204" description="33 kDa chaperonin">
    <location>
        <begin position="1"/>
        <end position="293"/>
    </location>
</feature>
<feature type="disulfide bond" description="Redox-active" evidence="1">
    <location>
        <begin position="238"/>
        <end position="240"/>
    </location>
</feature>
<feature type="disulfide bond" description="Redox-active" evidence="1">
    <location>
        <begin position="271"/>
        <end position="274"/>
    </location>
</feature>
<keyword id="KW-0143">Chaperone</keyword>
<keyword id="KW-0963">Cytoplasm</keyword>
<keyword id="KW-1015">Disulfide bond</keyword>
<keyword id="KW-0676">Redox-active center</keyword>
<keyword id="KW-0862">Zinc</keyword>
<organism>
    <name type="scientific">Staphylococcus aureus (strain MW2)</name>
    <dbReference type="NCBI Taxonomy" id="196620"/>
    <lineage>
        <taxon>Bacteria</taxon>
        <taxon>Bacillati</taxon>
        <taxon>Bacillota</taxon>
        <taxon>Bacilli</taxon>
        <taxon>Bacillales</taxon>
        <taxon>Staphylococcaceae</taxon>
        <taxon>Staphylococcus</taxon>
    </lineage>
</organism>
<comment type="function">
    <text evidence="1">Redox regulated molecular chaperone. Protects both thermally unfolding and oxidatively damaged proteins from irreversible aggregation. Plays an important role in the bacterial defense system toward oxidative stress.</text>
</comment>
<comment type="subcellular location">
    <subcellularLocation>
        <location evidence="1">Cytoplasm</location>
    </subcellularLocation>
</comment>
<comment type="PTM">
    <text evidence="1">Under oxidizing conditions two disulfide bonds are formed involving the reactive cysteines. Under reducing conditions zinc is bound to the reactive cysteines and the protein is inactive.</text>
</comment>
<comment type="similarity">
    <text evidence="1">Belongs to the HSP33 family.</text>
</comment>
<sequence>MTHDYIVKALAFDGEIRAYAALTTETVQEAQTRHYTWPTASAAMGRTMTATAMMGAMLKGDQKLTVTVDGQGPIGRIIADANAKGEVRAYVDHPQTHFPLNEQGKLDVRRAVGTNGSIMVVKDVGMKDYFSGASPIVSGELGEDFTYYYATSEQTPSSVGLGVLVNPDNTIKAAGGFIIQVMPGAKDETISKLEKAISEMTPVSKLIEQGLTPEGLLNEILGEDHVQILEKMPVQFECNCSHEKFLNAIKGLGEAEIQNMIKEDHGAEAVCHFCGNKYKYTEEELNVLLESLA</sequence>
<reference key="1">
    <citation type="journal article" date="2002" name="Lancet">
        <title>Genome and virulence determinants of high virulence community-acquired MRSA.</title>
        <authorList>
            <person name="Baba T."/>
            <person name="Takeuchi F."/>
            <person name="Kuroda M."/>
            <person name="Yuzawa H."/>
            <person name="Aoki K."/>
            <person name="Oguchi A."/>
            <person name="Nagai Y."/>
            <person name="Iwama N."/>
            <person name="Asano K."/>
            <person name="Naimi T."/>
            <person name="Kuroda H."/>
            <person name="Cui L."/>
            <person name="Yamamoto K."/>
            <person name="Hiramatsu K."/>
        </authorList>
    </citation>
    <scope>NUCLEOTIDE SEQUENCE [LARGE SCALE GENOMIC DNA]</scope>
    <source>
        <strain>MW2</strain>
    </source>
</reference>
<dbReference type="EMBL" id="BA000033">
    <property type="protein sequence ID" value="BAB94332.1"/>
    <property type="molecule type" value="Genomic_DNA"/>
</dbReference>
<dbReference type="RefSeq" id="WP_000148605.1">
    <property type="nucleotide sequence ID" value="NC_003923.1"/>
</dbReference>
<dbReference type="SMR" id="Q8NXZ3"/>
<dbReference type="KEGG" id="sam:MW0467"/>
<dbReference type="HOGENOM" id="CLU_054493_1_0_9"/>
<dbReference type="GO" id="GO:0005737">
    <property type="term" value="C:cytoplasm"/>
    <property type="evidence" value="ECO:0007669"/>
    <property type="project" value="UniProtKB-SubCell"/>
</dbReference>
<dbReference type="GO" id="GO:0044183">
    <property type="term" value="F:protein folding chaperone"/>
    <property type="evidence" value="ECO:0007669"/>
    <property type="project" value="TreeGrafter"/>
</dbReference>
<dbReference type="GO" id="GO:0051082">
    <property type="term" value="F:unfolded protein binding"/>
    <property type="evidence" value="ECO:0007669"/>
    <property type="project" value="UniProtKB-UniRule"/>
</dbReference>
<dbReference type="GO" id="GO:0042026">
    <property type="term" value="P:protein refolding"/>
    <property type="evidence" value="ECO:0007669"/>
    <property type="project" value="TreeGrafter"/>
</dbReference>
<dbReference type="CDD" id="cd00498">
    <property type="entry name" value="Hsp33"/>
    <property type="match status" value="1"/>
</dbReference>
<dbReference type="Gene3D" id="3.55.30.10">
    <property type="entry name" value="Hsp33 domain"/>
    <property type="match status" value="1"/>
</dbReference>
<dbReference type="Gene3D" id="3.90.1280.10">
    <property type="entry name" value="HSP33 redox switch-like"/>
    <property type="match status" value="1"/>
</dbReference>
<dbReference type="HAMAP" id="MF_00117">
    <property type="entry name" value="HslO"/>
    <property type="match status" value="1"/>
</dbReference>
<dbReference type="InterPro" id="IPR000397">
    <property type="entry name" value="Heat_shock_Hsp33"/>
</dbReference>
<dbReference type="InterPro" id="IPR016154">
    <property type="entry name" value="Heat_shock_Hsp33_C"/>
</dbReference>
<dbReference type="InterPro" id="IPR016153">
    <property type="entry name" value="Heat_shock_Hsp33_N"/>
</dbReference>
<dbReference type="NCBIfam" id="NF001033">
    <property type="entry name" value="PRK00114.1"/>
    <property type="match status" value="1"/>
</dbReference>
<dbReference type="PANTHER" id="PTHR30111">
    <property type="entry name" value="33 KDA CHAPERONIN"/>
    <property type="match status" value="1"/>
</dbReference>
<dbReference type="PANTHER" id="PTHR30111:SF1">
    <property type="entry name" value="33 KDA CHAPERONIN"/>
    <property type="match status" value="1"/>
</dbReference>
<dbReference type="Pfam" id="PF01430">
    <property type="entry name" value="HSP33"/>
    <property type="match status" value="1"/>
</dbReference>
<dbReference type="PIRSF" id="PIRSF005261">
    <property type="entry name" value="Heat_shock_Hsp33"/>
    <property type="match status" value="1"/>
</dbReference>
<dbReference type="SUPFAM" id="SSF64397">
    <property type="entry name" value="Hsp33 domain"/>
    <property type="match status" value="1"/>
</dbReference>
<dbReference type="SUPFAM" id="SSF118352">
    <property type="entry name" value="HSP33 redox switch-like"/>
    <property type="match status" value="1"/>
</dbReference>
<name>HSLO_STAAW</name>